<comment type="function">
    <text>Tropomyosin, in association with the troponin complex, plays a central role in the calcium dependent regulation of muscle contraction.</text>
</comment>
<comment type="domain">
    <text>The molecule is in a coiled coil structure that is formed by 2 polypeptide chains. The sequence exhibits a prominent seven-residues periodicity.</text>
</comment>
<comment type="allergen">
    <text>Causes an allergic reaction in human. Binds to IgE. A.simplex is a fish parasite that, when accidentally ingested by humans, may cause allergic reactions in sensitized individuals.</text>
</comment>
<comment type="similarity">
    <text evidence="3">Belongs to the tropomyosin family.</text>
</comment>
<keyword id="KW-0020">Allergen</keyword>
<keyword id="KW-0175">Coiled coil</keyword>
<keyword id="KW-0677">Repeat</keyword>
<evidence type="ECO:0000250" key="1"/>
<evidence type="ECO:0000256" key="2">
    <source>
        <dbReference type="SAM" id="MobiDB-lite"/>
    </source>
</evidence>
<evidence type="ECO:0000305" key="3"/>
<accession>Q9NAS5</accession>
<name>TPM_ANISI</name>
<sequence>MDAIKKKMQAMKIEKDNALDRADAAEEKVRQMTDKLERIEEELRDTQKKMMQTENDLDKAQEDLSTANSNLEEKEKKVQEAEAEVAALNRRMTLLEEELERAEERLKLATAKLEEATHTADESERVRKVMENRSFQDEERANTVESQLKEAQMLAEEADRKYDEVARKLTMVEADLERAEERAETGENKIVELEEELRVVGNNLKSLEVSEEKALQREDSYEEQIRTVSARLKEAETRAEFAERSVQKLQKEVDRLEDELVHEKERYKSISEELDQTFQELSGY</sequence>
<organism>
    <name type="scientific">Anisakis simplex</name>
    <name type="common">Herring worm</name>
    <dbReference type="NCBI Taxonomy" id="6269"/>
    <lineage>
        <taxon>Eukaryota</taxon>
        <taxon>Metazoa</taxon>
        <taxon>Ecdysozoa</taxon>
        <taxon>Nematoda</taxon>
        <taxon>Chromadorea</taxon>
        <taxon>Rhabditida</taxon>
        <taxon>Spirurina</taxon>
        <taxon>Ascaridomorpha</taxon>
        <taxon>Ascaridoidea</taxon>
        <taxon>Anisakidae</taxon>
        <taxon>Anisakis</taxon>
        <taxon>Anisakis simplex complex</taxon>
    </lineage>
</organism>
<proteinExistence type="evidence at protein level"/>
<feature type="chain" id="PRO_0000205643" description="Tropomyosin">
    <location>
        <begin position="1"/>
        <end position="284"/>
    </location>
</feature>
<feature type="region of interest" description="Disordered" evidence="2">
    <location>
        <begin position="110"/>
        <end position="143"/>
    </location>
</feature>
<feature type="coiled-coil region" evidence="1">
    <location>
        <begin position="1"/>
        <end position="284"/>
    </location>
</feature>
<feature type="compositionally biased region" description="Basic and acidic residues" evidence="2">
    <location>
        <begin position="110"/>
        <end position="142"/>
    </location>
</feature>
<protein>
    <recommendedName>
        <fullName>Tropomyosin</fullName>
    </recommendedName>
    <allergenName>Ani s 3</allergenName>
</protein>
<reference key="1">
    <citation type="journal article" date="2000" name="Mol. Biochem. Parasitol.">
        <title>Cloning and high level expression in Escherichia coli of an Anisakis simplex tropomyosin isoform.</title>
        <authorList>
            <person name="Asturias J.A."/>
            <person name="Eraso E."/>
            <person name="Martinez A."/>
        </authorList>
    </citation>
    <scope>NUCLEOTIDE SEQUENCE [MRNA]</scope>
</reference>
<dbReference type="EMBL" id="Y19221">
    <property type="protein sequence ID" value="CAB93501.1"/>
    <property type="molecule type" value="mRNA"/>
</dbReference>
<dbReference type="SMR" id="Q9NAS5"/>
<dbReference type="Allergome" id="3081">
    <property type="allergen name" value="Ani s 3.0101"/>
</dbReference>
<dbReference type="Allergome" id="37">
    <property type="allergen name" value="Ani s 3"/>
</dbReference>
<dbReference type="FunFam" id="1.20.5.170:FF:000005">
    <property type="entry name" value="Tropomyosin alpha-1 chain"/>
    <property type="match status" value="1"/>
</dbReference>
<dbReference type="FunFam" id="1.20.5.170:FF:000001">
    <property type="entry name" value="Tropomyosin alpha-1 chain isoform 1"/>
    <property type="match status" value="1"/>
</dbReference>
<dbReference type="FunFam" id="1.20.5.340:FF:000001">
    <property type="entry name" value="Tropomyosin alpha-1 chain isoform 2"/>
    <property type="match status" value="1"/>
</dbReference>
<dbReference type="Gene3D" id="1.20.5.170">
    <property type="match status" value="2"/>
</dbReference>
<dbReference type="Gene3D" id="1.20.5.340">
    <property type="match status" value="1"/>
</dbReference>
<dbReference type="InterPro" id="IPR000533">
    <property type="entry name" value="Tropomyosin"/>
</dbReference>
<dbReference type="PANTHER" id="PTHR19269">
    <property type="entry name" value="TROPOMYOSIN"/>
    <property type="match status" value="1"/>
</dbReference>
<dbReference type="Pfam" id="PF00261">
    <property type="entry name" value="Tropomyosin"/>
    <property type="match status" value="1"/>
</dbReference>
<dbReference type="PRINTS" id="PR00194">
    <property type="entry name" value="TROPOMYOSIN"/>
</dbReference>
<dbReference type="SUPFAM" id="SSF57997">
    <property type="entry name" value="Tropomyosin"/>
    <property type="match status" value="1"/>
</dbReference>
<dbReference type="PROSITE" id="PS00326">
    <property type="entry name" value="TROPOMYOSIN"/>
    <property type="match status" value="1"/>
</dbReference>